<organism>
    <name type="scientific">Salmonella heidelberg (strain SL476)</name>
    <dbReference type="NCBI Taxonomy" id="454169"/>
    <lineage>
        <taxon>Bacteria</taxon>
        <taxon>Pseudomonadati</taxon>
        <taxon>Pseudomonadota</taxon>
        <taxon>Gammaproteobacteria</taxon>
        <taxon>Enterobacterales</taxon>
        <taxon>Enterobacteriaceae</taxon>
        <taxon>Salmonella</taxon>
    </lineage>
</organism>
<feature type="chain" id="PRO_1000114763" description="Bifunctional uridylyltransferase/uridylyl-removing enzyme">
    <location>
        <begin position="1"/>
        <end position="890"/>
    </location>
</feature>
<feature type="domain" description="HD" evidence="2">
    <location>
        <begin position="468"/>
        <end position="590"/>
    </location>
</feature>
<feature type="domain" description="ACT 1" evidence="1">
    <location>
        <begin position="709"/>
        <end position="784"/>
    </location>
</feature>
<feature type="domain" description="ACT 2" evidence="1">
    <location>
        <begin position="816"/>
        <end position="890"/>
    </location>
</feature>
<feature type="region of interest" description="Uridylyltransferase">
    <location>
        <begin position="1"/>
        <end position="349"/>
    </location>
</feature>
<feature type="region of interest" description="Disordered" evidence="3">
    <location>
        <begin position="1"/>
        <end position="21"/>
    </location>
</feature>
<feature type="region of interest" description="Uridylyl-removing">
    <location>
        <begin position="350"/>
        <end position="708"/>
    </location>
</feature>
<sequence length="890" mass="102264">MNTLPEQHANTALPTLPDQPQNPGVWPRAELTVAGIKARIDIFQHWLGEAFDSGICAEQLIEARTEFIDQLLQRLWIEAGFGQIADLALVAVGGYGRGELHPLSDIDLLILSRKKLPDEQAQKVGELLTLLWDVKLDVGHSVRTLEECLLEGLSDLTVATNLIETRLLIGDVALFLALQKHIFSEGFWPSDKFYAAKVEEQNQRHQRYHGTSYNLEPDIKSSPGGLRDIHTLQWVARRHFGATSLDEMVGFGFLTPAERAELNECLHILWRIRFALHLVVSRYDNRLLFDRQLSVAQRLNYSGEGNDPVERMMKDYFRVTRRVSELNQMLLQLFDEAILALPADEKPRPVDDEFQLRGTLIDLRDDTLFIREPQAILRMFYMMVRNSAITGIYSTTLRHLRHARRHLSQPLCYIPEARTLFLSMLRHPGAVSRGLLPMHRHSVLWAYMPQWSHIVGQMQFDLFHAYTVDEHTIRVMLKLESFAKEETRQRHPLCVDLWPRLPHPELILIAALFHDIAKGRGGDHSVLGAQDVLTFAELHGLNSRETQLVAWLVRQHLLMSVTAQRRDIQDPEVIKQFAEEVQTETRLRFLVCLTVADICATNETLWNSWKQSLLRELYFATEKQLRRGMQNTPDMRERVRHHQLQALALLRMDNIDEAALHKIWTRCRANYFVRHSPNQLAWHARHLLQHDLRQPLVLLSPQATRGGTEIFIWSPDRPYLFAAVCAELDRRNLSVHDAQIFTTRDGMAMDTFIVLEPDGSPLAADRHDVIRTGLEQTITQRSWQPPQPRRQPAKLRHFTVETEVNFLPTHTDRKSFMELIALDQPGLLARVGQIFADLGISLHGARITTIGERVEDLFIIATADRRALNNVLQLEVQQRLTAALNPNDKG</sequence>
<evidence type="ECO:0000255" key="1">
    <source>
        <dbReference type="HAMAP-Rule" id="MF_00277"/>
    </source>
</evidence>
<evidence type="ECO:0000255" key="2">
    <source>
        <dbReference type="PROSITE-ProRule" id="PRU01175"/>
    </source>
</evidence>
<evidence type="ECO:0000256" key="3">
    <source>
        <dbReference type="SAM" id="MobiDB-lite"/>
    </source>
</evidence>
<dbReference type="EC" id="2.7.7.59" evidence="1"/>
<dbReference type="EC" id="3.1.4.-" evidence="1"/>
<dbReference type="EMBL" id="CP001120">
    <property type="protein sequence ID" value="ACF66615.1"/>
    <property type="molecule type" value="Genomic_DNA"/>
</dbReference>
<dbReference type="RefSeq" id="WP_001094519.1">
    <property type="nucleotide sequence ID" value="NC_011083.1"/>
</dbReference>
<dbReference type="SMR" id="B4TK42"/>
<dbReference type="KEGG" id="seh:SeHA_C0251"/>
<dbReference type="HOGENOM" id="CLU_012833_0_0_6"/>
<dbReference type="Proteomes" id="UP000001866">
    <property type="component" value="Chromosome"/>
</dbReference>
<dbReference type="GO" id="GO:0008773">
    <property type="term" value="F:[protein-PII] uridylyltransferase activity"/>
    <property type="evidence" value="ECO:0007669"/>
    <property type="project" value="UniProtKB-UniRule"/>
</dbReference>
<dbReference type="GO" id="GO:0008081">
    <property type="term" value="F:phosphoric diester hydrolase activity"/>
    <property type="evidence" value="ECO:0007669"/>
    <property type="project" value="UniProtKB-UniRule"/>
</dbReference>
<dbReference type="GO" id="GO:0006808">
    <property type="term" value="P:regulation of nitrogen utilization"/>
    <property type="evidence" value="ECO:0007669"/>
    <property type="project" value="UniProtKB-UniRule"/>
</dbReference>
<dbReference type="CDD" id="cd04899">
    <property type="entry name" value="ACT_ACR-UUR-like_2"/>
    <property type="match status" value="1"/>
</dbReference>
<dbReference type="CDD" id="cd04900">
    <property type="entry name" value="ACT_UUR-like_1"/>
    <property type="match status" value="1"/>
</dbReference>
<dbReference type="CDD" id="cd00077">
    <property type="entry name" value="HDc"/>
    <property type="match status" value="1"/>
</dbReference>
<dbReference type="CDD" id="cd05401">
    <property type="entry name" value="NT_GlnE_GlnD_like"/>
    <property type="match status" value="1"/>
</dbReference>
<dbReference type="FunFam" id="1.10.3210.10:FF:000005">
    <property type="entry name" value="Bifunctional uridylyltransferase/uridylyl-removing enzyme"/>
    <property type="match status" value="1"/>
</dbReference>
<dbReference type="Gene3D" id="1.10.3210.10">
    <property type="entry name" value="Hypothetical protein af1432"/>
    <property type="match status" value="1"/>
</dbReference>
<dbReference type="Gene3D" id="1.20.120.330">
    <property type="entry name" value="Nucleotidyltransferases domain 2"/>
    <property type="match status" value="1"/>
</dbReference>
<dbReference type="HAMAP" id="MF_00277">
    <property type="entry name" value="PII_uridylyl_transf"/>
    <property type="match status" value="1"/>
</dbReference>
<dbReference type="InterPro" id="IPR045865">
    <property type="entry name" value="ACT-like_dom_sf"/>
</dbReference>
<dbReference type="InterPro" id="IPR002912">
    <property type="entry name" value="ACT_dom"/>
</dbReference>
<dbReference type="InterPro" id="IPR003607">
    <property type="entry name" value="HD/PDEase_dom"/>
</dbReference>
<dbReference type="InterPro" id="IPR006674">
    <property type="entry name" value="HD_domain"/>
</dbReference>
<dbReference type="InterPro" id="IPR043519">
    <property type="entry name" value="NT_sf"/>
</dbReference>
<dbReference type="InterPro" id="IPR013546">
    <property type="entry name" value="PII_UdlTrfase/GS_AdlTrfase"/>
</dbReference>
<dbReference type="InterPro" id="IPR002934">
    <property type="entry name" value="Polymerase_NTP_transf_dom"/>
</dbReference>
<dbReference type="InterPro" id="IPR010043">
    <property type="entry name" value="UTase/UR"/>
</dbReference>
<dbReference type="NCBIfam" id="NF002487">
    <property type="entry name" value="PRK01759.1"/>
    <property type="match status" value="1"/>
</dbReference>
<dbReference type="NCBIfam" id="NF003448">
    <property type="entry name" value="PRK05007.1"/>
    <property type="match status" value="1"/>
</dbReference>
<dbReference type="NCBIfam" id="TIGR01693">
    <property type="entry name" value="UTase_glnD"/>
    <property type="match status" value="1"/>
</dbReference>
<dbReference type="PANTHER" id="PTHR47320">
    <property type="entry name" value="BIFUNCTIONAL URIDYLYLTRANSFERASE/URIDYLYL-REMOVING ENZYME"/>
    <property type="match status" value="1"/>
</dbReference>
<dbReference type="PANTHER" id="PTHR47320:SF1">
    <property type="entry name" value="BIFUNCTIONAL URIDYLYLTRANSFERASE_URIDYLYL-REMOVING ENZYME"/>
    <property type="match status" value="1"/>
</dbReference>
<dbReference type="Pfam" id="PF01842">
    <property type="entry name" value="ACT"/>
    <property type="match status" value="2"/>
</dbReference>
<dbReference type="Pfam" id="PF08335">
    <property type="entry name" value="GlnD_UR_UTase"/>
    <property type="match status" value="1"/>
</dbReference>
<dbReference type="Pfam" id="PF01966">
    <property type="entry name" value="HD"/>
    <property type="match status" value="1"/>
</dbReference>
<dbReference type="Pfam" id="PF01909">
    <property type="entry name" value="NTP_transf_2"/>
    <property type="match status" value="1"/>
</dbReference>
<dbReference type="PIRSF" id="PIRSF006288">
    <property type="entry name" value="PII_uridyltransf"/>
    <property type="match status" value="1"/>
</dbReference>
<dbReference type="SMART" id="SM00471">
    <property type="entry name" value="HDc"/>
    <property type="match status" value="1"/>
</dbReference>
<dbReference type="SUPFAM" id="SSF55021">
    <property type="entry name" value="ACT-like"/>
    <property type="match status" value="2"/>
</dbReference>
<dbReference type="SUPFAM" id="SSF109604">
    <property type="entry name" value="HD-domain/PDEase-like"/>
    <property type="match status" value="1"/>
</dbReference>
<dbReference type="SUPFAM" id="SSF81301">
    <property type="entry name" value="Nucleotidyltransferase"/>
    <property type="match status" value="1"/>
</dbReference>
<dbReference type="SUPFAM" id="SSF81593">
    <property type="entry name" value="Nucleotidyltransferase substrate binding subunit/domain"/>
    <property type="match status" value="1"/>
</dbReference>
<dbReference type="PROSITE" id="PS51671">
    <property type="entry name" value="ACT"/>
    <property type="match status" value="2"/>
</dbReference>
<dbReference type="PROSITE" id="PS51831">
    <property type="entry name" value="HD"/>
    <property type="match status" value="1"/>
</dbReference>
<proteinExistence type="inferred from homology"/>
<protein>
    <recommendedName>
        <fullName evidence="1">Bifunctional uridylyltransferase/uridylyl-removing enzyme</fullName>
        <shortName evidence="1">UTase/UR</shortName>
    </recommendedName>
    <alternativeName>
        <fullName evidence="1">Bifunctional [protein-PII] modification enzyme</fullName>
    </alternativeName>
    <alternativeName>
        <fullName evidence="1">Bifunctional nitrogen sensor protein</fullName>
    </alternativeName>
    <domain>
        <recommendedName>
            <fullName evidence="1">[Protein-PII] uridylyltransferase</fullName>
            <shortName evidence="1">PII uridylyltransferase</shortName>
            <shortName evidence="1">UTase</shortName>
            <ecNumber evidence="1">2.7.7.59</ecNumber>
        </recommendedName>
    </domain>
    <domain>
        <recommendedName>
            <fullName evidence="1">[Protein-PII]-UMP uridylyl-removing enzyme</fullName>
            <shortName evidence="1">UR</shortName>
            <ecNumber evidence="1">3.1.4.-</ecNumber>
        </recommendedName>
    </domain>
</protein>
<keyword id="KW-0378">Hydrolase</keyword>
<keyword id="KW-0460">Magnesium</keyword>
<keyword id="KW-0511">Multifunctional enzyme</keyword>
<keyword id="KW-0548">Nucleotidyltransferase</keyword>
<keyword id="KW-0677">Repeat</keyword>
<keyword id="KW-0808">Transferase</keyword>
<reference key="1">
    <citation type="journal article" date="2011" name="J. Bacteriol.">
        <title>Comparative genomics of 28 Salmonella enterica isolates: evidence for CRISPR-mediated adaptive sublineage evolution.</title>
        <authorList>
            <person name="Fricke W.F."/>
            <person name="Mammel M.K."/>
            <person name="McDermott P.F."/>
            <person name="Tartera C."/>
            <person name="White D.G."/>
            <person name="Leclerc J.E."/>
            <person name="Ravel J."/>
            <person name="Cebula T.A."/>
        </authorList>
    </citation>
    <scope>NUCLEOTIDE SEQUENCE [LARGE SCALE GENOMIC DNA]</scope>
    <source>
        <strain>SL476</strain>
    </source>
</reference>
<accession>B4TK42</accession>
<gene>
    <name evidence="1" type="primary">glnD</name>
    <name type="ordered locus">SeHA_C0251</name>
</gene>
<name>GLND_SALHS</name>
<comment type="function">
    <text evidence="1">Modifies, by uridylylation and deuridylylation, the PII regulatory proteins (GlnB and homologs), in response to the nitrogen status of the cell that GlnD senses through the glutamine level. Under low glutamine levels, catalyzes the conversion of the PII proteins and UTP to PII-UMP and PPi, while under higher glutamine levels, GlnD hydrolyzes PII-UMP to PII and UMP (deuridylylation). Thus, controls uridylylation state and activity of the PII proteins, and plays an important role in the regulation of nitrogen assimilation and metabolism.</text>
</comment>
<comment type="catalytic activity">
    <reaction evidence="1">
        <text>[protein-PII]-L-tyrosine + UTP = [protein-PII]-uridylyl-L-tyrosine + diphosphate</text>
        <dbReference type="Rhea" id="RHEA:13673"/>
        <dbReference type="Rhea" id="RHEA-COMP:12147"/>
        <dbReference type="Rhea" id="RHEA-COMP:12148"/>
        <dbReference type="ChEBI" id="CHEBI:33019"/>
        <dbReference type="ChEBI" id="CHEBI:46398"/>
        <dbReference type="ChEBI" id="CHEBI:46858"/>
        <dbReference type="ChEBI" id="CHEBI:90602"/>
        <dbReference type="EC" id="2.7.7.59"/>
    </reaction>
</comment>
<comment type="catalytic activity">
    <reaction evidence="1">
        <text>[protein-PII]-uridylyl-L-tyrosine + H2O = [protein-PII]-L-tyrosine + UMP + H(+)</text>
        <dbReference type="Rhea" id="RHEA:48600"/>
        <dbReference type="Rhea" id="RHEA-COMP:12147"/>
        <dbReference type="Rhea" id="RHEA-COMP:12148"/>
        <dbReference type="ChEBI" id="CHEBI:15377"/>
        <dbReference type="ChEBI" id="CHEBI:15378"/>
        <dbReference type="ChEBI" id="CHEBI:46858"/>
        <dbReference type="ChEBI" id="CHEBI:57865"/>
        <dbReference type="ChEBI" id="CHEBI:90602"/>
    </reaction>
</comment>
<comment type="cofactor">
    <cofactor evidence="1">
        <name>Mg(2+)</name>
        <dbReference type="ChEBI" id="CHEBI:18420"/>
    </cofactor>
</comment>
<comment type="activity regulation">
    <text evidence="1">Uridylyltransferase (UTase) activity is inhibited by glutamine, while glutamine activates uridylyl-removing (UR) activity.</text>
</comment>
<comment type="domain">
    <text evidence="1">Has four distinct domains: an N-terminal nucleotidyltransferase (NT) domain responsible for UTase activity, a central HD domain that encodes UR activity, and two C-terminal ACT domains that seem to have a role in glutamine sensing.</text>
</comment>
<comment type="similarity">
    <text evidence="1">Belongs to the GlnD family.</text>
</comment>